<accession>B2TBS1</accession>
<sequence>MARTHIPGFPRIGAQRELKFAQESFWRGESDEQYLLGVARELRARHWQLQQDAKLDFVTVGDFAYYDQMLNLSALLGALPQRFGFDAKTLSLARYYELARGNAAQPAMEMTKWFDTNYHYLVPELGPQTTFDGGVEWLFDEIDEALALNLPVKPVLIGPITYLWLSKSHVAGFDRLSLLPKLVIRYSRLLEKLKQRGIEWVQLDEPALCVDLPVEWLDAFSAAYDVLGTSGVKVLLATYFESAAEHAPRVAVLPVAGVHLDLVRAPQQLDAWRAALPKHAVLSAGVIDGRNIWRADLGEIFESLQALHAEFGERLWVSSSCSLLHVPVSLDAEQKLDADLKSWLAFATEKLGEVATLALALRDPAAAEATLAAADRALDARRHSSTVVNALVQKRVAAVSSAMADRQSPFAERNRLQREALGLPLLPTTTIGSFPQTPAIRQARAAYKRGELRALDYLQRMRAEIEIAVRKQEELGLDVLVHGEAERNDMVEYFGEQLWGYAFTENGWVQSYGSRCVKPPIIYGDVYRPEPMTVETTRYAQSLTQRLMKGMLTGPVTMLQWSFVRDDQPRSTTALQLALAIRDEVVDLEKAGIRIIQIDEPAFREGLPLRRGDWAAYLEWATRVFRISAAGVADQTQIHTHMCYSEFNDILPSIAAMDADVITIETSRSAMELLDGFGAFAYPNEIGPGVYDIHSPRVPDAQAMQRLLERACEVIPAERLWVNPDCGLKTRGWPETEAALTNMVRAAKALRAKLAAKQPDEVTA</sequence>
<evidence type="ECO:0000255" key="1">
    <source>
        <dbReference type="HAMAP-Rule" id="MF_00172"/>
    </source>
</evidence>
<reference key="1">
    <citation type="journal article" date="2011" name="J. Bacteriol.">
        <title>Complete genome sequence of the plant growth-promoting endophyte Burkholderia phytofirmans strain PsJN.</title>
        <authorList>
            <person name="Weilharter A."/>
            <person name="Mitter B."/>
            <person name="Shin M.V."/>
            <person name="Chain P.S."/>
            <person name="Nowak J."/>
            <person name="Sessitsch A."/>
        </authorList>
    </citation>
    <scope>NUCLEOTIDE SEQUENCE [LARGE SCALE GENOMIC DNA]</scope>
    <source>
        <strain>DSM 17436 / LMG 22146 / PsJN</strain>
    </source>
</reference>
<protein>
    <recommendedName>
        <fullName evidence="1">5-methyltetrahydropteroyltriglutamate--homocysteine methyltransferase</fullName>
        <ecNumber evidence="1">2.1.1.14</ecNumber>
    </recommendedName>
    <alternativeName>
        <fullName evidence="1">Cobalamin-independent methionine synthase</fullName>
    </alternativeName>
    <alternativeName>
        <fullName evidence="1">Methionine synthase, vitamin-B12 independent isozyme</fullName>
    </alternativeName>
</protein>
<proteinExistence type="inferred from homology"/>
<organism>
    <name type="scientific">Paraburkholderia phytofirmans (strain DSM 17436 / LMG 22146 / PsJN)</name>
    <name type="common">Burkholderia phytofirmans</name>
    <dbReference type="NCBI Taxonomy" id="398527"/>
    <lineage>
        <taxon>Bacteria</taxon>
        <taxon>Pseudomonadati</taxon>
        <taxon>Pseudomonadota</taxon>
        <taxon>Betaproteobacteria</taxon>
        <taxon>Burkholderiales</taxon>
        <taxon>Burkholderiaceae</taxon>
        <taxon>Paraburkholderia</taxon>
    </lineage>
</organism>
<gene>
    <name evidence="1" type="primary">metE</name>
    <name type="ordered locus">Bphyt_5364</name>
</gene>
<keyword id="KW-0028">Amino-acid biosynthesis</keyword>
<keyword id="KW-0479">Metal-binding</keyword>
<keyword id="KW-0486">Methionine biosynthesis</keyword>
<keyword id="KW-0489">Methyltransferase</keyword>
<keyword id="KW-0677">Repeat</keyword>
<keyword id="KW-0808">Transferase</keyword>
<keyword id="KW-0862">Zinc</keyword>
<feature type="chain" id="PRO_1000097821" description="5-methyltetrahydropteroyltriglutamate--homocysteine methyltransferase">
    <location>
        <begin position="1"/>
        <end position="764"/>
    </location>
</feature>
<feature type="active site" description="Proton donor" evidence="1">
    <location>
        <position position="694"/>
    </location>
</feature>
<feature type="binding site" evidence="1">
    <location>
        <begin position="16"/>
        <end position="19"/>
    </location>
    <ligand>
        <name>5-methyltetrahydropteroyltri-L-glutamate</name>
        <dbReference type="ChEBI" id="CHEBI:58207"/>
    </ligand>
</feature>
<feature type="binding site" evidence="1">
    <location>
        <position position="112"/>
    </location>
    <ligand>
        <name>5-methyltetrahydropteroyltri-L-glutamate</name>
        <dbReference type="ChEBI" id="CHEBI:58207"/>
    </ligand>
</feature>
<feature type="binding site" evidence="1">
    <location>
        <begin position="431"/>
        <end position="433"/>
    </location>
    <ligand>
        <name>L-homocysteine</name>
        <dbReference type="ChEBI" id="CHEBI:58199"/>
    </ligand>
</feature>
<feature type="binding site" evidence="1">
    <location>
        <begin position="431"/>
        <end position="433"/>
    </location>
    <ligand>
        <name>L-methionine</name>
        <dbReference type="ChEBI" id="CHEBI:57844"/>
    </ligand>
</feature>
<feature type="binding site" evidence="1">
    <location>
        <position position="484"/>
    </location>
    <ligand>
        <name>L-homocysteine</name>
        <dbReference type="ChEBI" id="CHEBI:58199"/>
    </ligand>
</feature>
<feature type="binding site" evidence="1">
    <location>
        <position position="484"/>
    </location>
    <ligand>
        <name>L-methionine</name>
        <dbReference type="ChEBI" id="CHEBI:57844"/>
    </ligand>
</feature>
<feature type="binding site" evidence="1">
    <location>
        <begin position="515"/>
        <end position="516"/>
    </location>
    <ligand>
        <name>5-methyltetrahydropteroyltri-L-glutamate</name>
        <dbReference type="ChEBI" id="CHEBI:58207"/>
    </ligand>
</feature>
<feature type="binding site" evidence="1">
    <location>
        <position position="561"/>
    </location>
    <ligand>
        <name>5-methyltetrahydropteroyltri-L-glutamate</name>
        <dbReference type="ChEBI" id="CHEBI:58207"/>
    </ligand>
</feature>
<feature type="binding site" evidence="1">
    <location>
        <position position="599"/>
    </location>
    <ligand>
        <name>L-homocysteine</name>
        <dbReference type="ChEBI" id="CHEBI:58199"/>
    </ligand>
</feature>
<feature type="binding site" evidence="1">
    <location>
        <position position="599"/>
    </location>
    <ligand>
        <name>L-methionine</name>
        <dbReference type="ChEBI" id="CHEBI:57844"/>
    </ligand>
</feature>
<feature type="binding site" evidence="1">
    <location>
        <position position="605"/>
    </location>
    <ligand>
        <name>5-methyltetrahydropteroyltri-L-glutamate</name>
        <dbReference type="ChEBI" id="CHEBI:58207"/>
    </ligand>
</feature>
<feature type="binding site" evidence="1">
    <location>
        <position position="641"/>
    </location>
    <ligand>
        <name>Zn(2+)</name>
        <dbReference type="ChEBI" id="CHEBI:29105"/>
        <note>catalytic</note>
    </ligand>
</feature>
<feature type="binding site" evidence="1">
    <location>
        <position position="643"/>
    </location>
    <ligand>
        <name>Zn(2+)</name>
        <dbReference type="ChEBI" id="CHEBI:29105"/>
        <note>catalytic</note>
    </ligand>
</feature>
<feature type="binding site" evidence="1">
    <location>
        <position position="665"/>
    </location>
    <ligand>
        <name>Zn(2+)</name>
        <dbReference type="ChEBI" id="CHEBI:29105"/>
        <note>catalytic</note>
    </ligand>
</feature>
<feature type="binding site" evidence="1">
    <location>
        <position position="726"/>
    </location>
    <ligand>
        <name>Zn(2+)</name>
        <dbReference type="ChEBI" id="CHEBI:29105"/>
        <note>catalytic</note>
    </ligand>
</feature>
<dbReference type="EC" id="2.1.1.14" evidence="1"/>
<dbReference type="EMBL" id="CP001053">
    <property type="protein sequence ID" value="ACD19723.1"/>
    <property type="molecule type" value="Genomic_DNA"/>
</dbReference>
<dbReference type="RefSeq" id="WP_012427231.1">
    <property type="nucleotide sequence ID" value="NC_010676.1"/>
</dbReference>
<dbReference type="SMR" id="B2TBS1"/>
<dbReference type="STRING" id="398527.Bphyt_5364"/>
<dbReference type="KEGG" id="bpy:Bphyt_5364"/>
<dbReference type="eggNOG" id="COG0620">
    <property type="taxonomic scope" value="Bacteria"/>
</dbReference>
<dbReference type="HOGENOM" id="CLU_013175_0_0_4"/>
<dbReference type="OrthoDB" id="244285at2"/>
<dbReference type="UniPathway" id="UPA00051">
    <property type="reaction ID" value="UER00082"/>
</dbReference>
<dbReference type="Proteomes" id="UP000001739">
    <property type="component" value="Chromosome 2"/>
</dbReference>
<dbReference type="GO" id="GO:0003871">
    <property type="term" value="F:5-methyltetrahydropteroyltriglutamate-homocysteine S-methyltransferase activity"/>
    <property type="evidence" value="ECO:0007669"/>
    <property type="project" value="UniProtKB-UniRule"/>
</dbReference>
<dbReference type="GO" id="GO:0008270">
    <property type="term" value="F:zinc ion binding"/>
    <property type="evidence" value="ECO:0007669"/>
    <property type="project" value="InterPro"/>
</dbReference>
<dbReference type="GO" id="GO:0009086">
    <property type="term" value="P:methionine biosynthetic process"/>
    <property type="evidence" value="ECO:0007669"/>
    <property type="project" value="UniProtKB-UniRule"/>
</dbReference>
<dbReference type="GO" id="GO:0032259">
    <property type="term" value="P:methylation"/>
    <property type="evidence" value="ECO:0007669"/>
    <property type="project" value="UniProtKB-KW"/>
</dbReference>
<dbReference type="CDD" id="cd03311">
    <property type="entry name" value="CIMS_C_terminal_like"/>
    <property type="match status" value="1"/>
</dbReference>
<dbReference type="CDD" id="cd03312">
    <property type="entry name" value="CIMS_N_terminal_like"/>
    <property type="match status" value="1"/>
</dbReference>
<dbReference type="FunFam" id="3.20.20.210:FF:000002">
    <property type="entry name" value="5-methyltetrahydropteroyltriglutamate--homocysteine methyltransferase"/>
    <property type="match status" value="1"/>
</dbReference>
<dbReference type="Gene3D" id="3.20.20.210">
    <property type="match status" value="2"/>
</dbReference>
<dbReference type="HAMAP" id="MF_00172">
    <property type="entry name" value="Meth_synth"/>
    <property type="match status" value="1"/>
</dbReference>
<dbReference type="InterPro" id="IPR013215">
    <property type="entry name" value="Cbl-indep_Met_Synth_N"/>
</dbReference>
<dbReference type="InterPro" id="IPR006276">
    <property type="entry name" value="Cobalamin-indep_Met_synthase"/>
</dbReference>
<dbReference type="InterPro" id="IPR002629">
    <property type="entry name" value="Met_Synth_C/arc"/>
</dbReference>
<dbReference type="InterPro" id="IPR038071">
    <property type="entry name" value="UROD/MetE-like_sf"/>
</dbReference>
<dbReference type="NCBIfam" id="TIGR01371">
    <property type="entry name" value="met_syn_B12ind"/>
    <property type="match status" value="1"/>
</dbReference>
<dbReference type="NCBIfam" id="NF003556">
    <property type="entry name" value="PRK05222.1"/>
    <property type="match status" value="1"/>
</dbReference>
<dbReference type="PANTHER" id="PTHR30519">
    <property type="entry name" value="5-METHYLTETRAHYDROPTEROYLTRIGLUTAMATE--HOMOCYSTEINE METHYLTRANSFERASE"/>
    <property type="match status" value="1"/>
</dbReference>
<dbReference type="Pfam" id="PF08267">
    <property type="entry name" value="Meth_synt_1"/>
    <property type="match status" value="1"/>
</dbReference>
<dbReference type="Pfam" id="PF01717">
    <property type="entry name" value="Meth_synt_2"/>
    <property type="match status" value="1"/>
</dbReference>
<dbReference type="PIRSF" id="PIRSF000382">
    <property type="entry name" value="MeTrfase_B12_ind"/>
    <property type="match status" value="1"/>
</dbReference>
<dbReference type="SUPFAM" id="SSF51726">
    <property type="entry name" value="UROD/MetE-like"/>
    <property type="match status" value="2"/>
</dbReference>
<comment type="function">
    <text evidence="1">Catalyzes the transfer of a methyl group from 5-methyltetrahydrofolate to homocysteine resulting in methionine formation.</text>
</comment>
<comment type="catalytic activity">
    <reaction evidence="1">
        <text>5-methyltetrahydropteroyltri-L-glutamate + L-homocysteine = tetrahydropteroyltri-L-glutamate + L-methionine</text>
        <dbReference type="Rhea" id="RHEA:21196"/>
        <dbReference type="ChEBI" id="CHEBI:57844"/>
        <dbReference type="ChEBI" id="CHEBI:58140"/>
        <dbReference type="ChEBI" id="CHEBI:58199"/>
        <dbReference type="ChEBI" id="CHEBI:58207"/>
        <dbReference type="EC" id="2.1.1.14"/>
    </reaction>
</comment>
<comment type="cofactor">
    <cofactor evidence="1">
        <name>Zn(2+)</name>
        <dbReference type="ChEBI" id="CHEBI:29105"/>
    </cofactor>
    <text evidence="1">Binds 1 zinc ion per subunit.</text>
</comment>
<comment type="pathway">
    <text evidence="1">Amino-acid biosynthesis; L-methionine biosynthesis via de novo pathway; L-methionine from L-homocysteine (MetE route): step 1/1.</text>
</comment>
<comment type="similarity">
    <text evidence="1">Belongs to the vitamin-B12 independent methionine synthase family.</text>
</comment>
<name>METE_PARPJ</name>